<evidence type="ECO:0000255" key="1">
    <source>
        <dbReference type="HAMAP-Rule" id="MF_00757"/>
    </source>
</evidence>
<feature type="chain" id="PRO_1000194596" description="Ribonuclease P protein component 4">
    <location>
        <begin position="1"/>
        <end position="106"/>
    </location>
</feature>
<feature type="binding site" evidence="1">
    <location>
        <position position="62"/>
    </location>
    <ligand>
        <name>Zn(2+)</name>
        <dbReference type="ChEBI" id="CHEBI:29105"/>
    </ligand>
</feature>
<feature type="binding site" evidence="1">
    <location>
        <position position="65"/>
    </location>
    <ligand>
        <name>Zn(2+)</name>
        <dbReference type="ChEBI" id="CHEBI:29105"/>
    </ligand>
</feature>
<feature type="binding site" evidence="1">
    <location>
        <position position="88"/>
    </location>
    <ligand>
        <name>Zn(2+)</name>
        <dbReference type="ChEBI" id="CHEBI:29105"/>
    </ligand>
</feature>
<feature type="binding site" evidence="1">
    <location>
        <position position="91"/>
    </location>
    <ligand>
        <name>Zn(2+)</name>
        <dbReference type="ChEBI" id="CHEBI:29105"/>
    </ligand>
</feature>
<organism>
    <name type="scientific">Methanocorpusculum labreanum (strain ATCC 43576 / DSM 4855 / Z)</name>
    <dbReference type="NCBI Taxonomy" id="410358"/>
    <lineage>
        <taxon>Archaea</taxon>
        <taxon>Methanobacteriati</taxon>
        <taxon>Methanobacteriota</taxon>
        <taxon>Stenosarchaea group</taxon>
        <taxon>Methanomicrobia</taxon>
        <taxon>Methanomicrobiales</taxon>
        <taxon>Methanocorpusculaceae</taxon>
        <taxon>Methanocorpusculum</taxon>
    </lineage>
</organism>
<sequence length="106" mass="12159">MAKAEKGVSAKKIAQERVDILFERAKEARDEPELSARYVSLAREMAMKQRVRLAHYHRRSFCPSCHAYFIPGTNLRVRIQHGKIIYTCGICGAVTRIPLNKKTESR</sequence>
<dbReference type="EC" id="3.1.26.5" evidence="1"/>
<dbReference type="EMBL" id="CP000559">
    <property type="protein sequence ID" value="ABN07649.1"/>
    <property type="molecule type" value="Genomic_DNA"/>
</dbReference>
<dbReference type="RefSeq" id="WP_011833852.1">
    <property type="nucleotide sequence ID" value="NC_008942.1"/>
</dbReference>
<dbReference type="SMR" id="A2STJ3"/>
<dbReference type="STRING" id="410358.Mlab_1485"/>
<dbReference type="GeneID" id="4795482"/>
<dbReference type="KEGG" id="mla:Mlab_1485"/>
<dbReference type="eggNOG" id="arCOG04345">
    <property type="taxonomic scope" value="Archaea"/>
</dbReference>
<dbReference type="HOGENOM" id="CLU_079140_3_1_2"/>
<dbReference type="OrthoDB" id="10058at2157"/>
<dbReference type="Proteomes" id="UP000000365">
    <property type="component" value="Chromosome"/>
</dbReference>
<dbReference type="GO" id="GO:0030127">
    <property type="term" value="C:COPII vesicle coat"/>
    <property type="evidence" value="ECO:0007669"/>
    <property type="project" value="InterPro"/>
</dbReference>
<dbReference type="GO" id="GO:0030677">
    <property type="term" value="C:ribonuclease P complex"/>
    <property type="evidence" value="ECO:0007669"/>
    <property type="project" value="UniProtKB-UniRule"/>
</dbReference>
<dbReference type="GO" id="GO:0004526">
    <property type="term" value="F:ribonuclease P activity"/>
    <property type="evidence" value="ECO:0007669"/>
    <property type="project" value="UniProtKB-UniRule"/>
</dbReference>
<dbReference type="GO" id="GO:0008270">
    <property type="term" value="F:zinc ion binding"/>
    <property type="evidence" value="ECO:0007669"/>
    <property type="project" value="UniProtKB-UniRule"/>
</dbReference>
<dbReference type="GO" id="GO:0006888">
    <property type="term" value="P:endoplasmic reticulum to Golgi vesicle-mediated transport"/>
    <property type="evidence" value="ECO:0007669"/>
    <property type="project" value="InterPro"/>
</dbReference>
<dbReference type="GO" id="GO:0006886">
    <property type="term" value="P:intracellular protein transport"/>
    <property type="evidence" value="ECO:0007669"/>
    <property type="project" value="InterPro"/>
</dbReference>
<dbReference type="GO" id="GO:0001682">
    <property type="term" value="P:tRNA 5'-leader removal"/>
    <property type="evidence" value="ECO:0007669"/>
    <property type="project" value="UniProtKB-UniRule"/>
</dbReference>
<dbReference type="Gene3D" id="6.20.50.20">
    <property type="match status" value="1"/>
</dbReference>
<dbReference type="Gene3D" id="1.20.5.420">
    <property type="entry name" value="Immunoglobulin FC, subunit C"/>
    <property type="match status" value="1"/>
</dbReference>
<dbReference type="HAMAP" id="MF_00757">
    <property type="entry name" value="RNase_P_4"/>
    <property type="match status" value="1"/>
</dbReference>
<dbReference type="InterPro" id="IPR016432">
    <property type="entry name" value="RNP4"/>
</dbReference>
<dbReference type="InterPro" id="IPR007175">
    <property type="entry name" value="Rpr2/Snm1/Rpp21"/>
</dbReference>
<dbReference type="InterPro" id="IPR036174">
    <property type="entry name" value="Znf_Sec23_Sec24_sf"/>
</dbReference>
<dbReference type="PANTHER" id="PTHR14742:SF0">
    <property type="entry name" value="RIBONUCLEASE P PROTEIN SUBUNIT P21"/>
    <property type="match status" value="1"/>
</dbReference>
<dbReference type="PANTHER" id="PTHR14742">
    <property type="entry name" value="RIBONUCLEASE P SUBUNIT P21"/>
    <property type="match status" value="1"/>
</dbReference>
<dbReference type="Pfam" id="PF04032">
    <property type="entry name" value="Rpr2"/>
    <property type="match status" value="1"/>
</dbReference>
<dbReference type="PIRSF" id="PIRSF004878">
    <property type="entry name" value="RNase_P_4"/>
    <property type="match status" value="1"/>
</dbReference>
<dbReference type="SUPFAM" id="SSF82919">
    <property type="entry name" value="Zn-finger domain of Sec23/24"/>
    <property type="match status" value="1"/>
</dbReference>
<accession>A2STJ3</accession>
<comment type="function">
    <text evidence="1">Part of ribonuclease P, a protein complex that generates mature tRNA molecules by cleaving their 5'-ends.</text>
</comment>
<comment type="catalytic activity">
    <reaction evidence="1">
        <text>Endonucleolytic cleavage of RNA, removing 5'-extranucleotides from tRNA precursor.</text>
        <dbReference type="EC" id="3.1.26.5"/>
    </reaction>
</comment>
<comment type="cofactor">
    <cofactor evidence="1">
        <name>Zn(2+)</name>
        <dbReference type="ChEBI" id="CHEBI:29105"/>
    </cofactor>
    <text evidence="1">Binds 1 zinc ion per subunit.</text>
</comment>
<comment type="subunit">
    <text evidence="1">Consists of a catalytic RNA component and at least 4-5 protein subunits.</text>
</comment>
<comment type="subcellular location">
    <subcellularLocation>
        <location evidence="1">Cytoplasm</location>
    </subcellularLocation>
</comment>
<comment type="similarity">
    <text evidence="1">Belongs to the eukaryotic/archaeal RNase P protein component 4 family.</text>
</comment>
<gene>
    <name evidence="1" type="primary">rnp4</name>
    <name type="ordered locus">Mlab_1485</name>
</gene>
<reference key="1">
    <citation type="journal article" date="2009" name="Stand. Genomic Sci.">
        <title>Complete genome sequence of Methanocorpusculum labreanum type strain Z.</title>
        <authorList>
            <person name="Anderson I.J."/>
            <person name="Sieprawska-Lupa M."/>
            <person name="Goltsman E."/>
            <person name="Lapidus A."/>
            <person name="Copeland A."/>
            <person name="Glavina Del Rio T."/>
            <person name="Tice H."/>
            <person name="Dalin E."/>
            <person name="Barry K."/>
            <person name="Pitluck S."/>
            <person name="Hauser L."/>
            <person name="Land M."/>
            <person name="Lucas S."/>
            <person name="Richardson P."/>
            <person name="Whitman W.B."/>
            <person name="Kyrpides N.C."/>
        </authorList>
    </citation>
    <scope>NUCLEOTIDE SEQUENCE [LARGE SCALE GENOMIC DNA]</scope>
    <source>
        <strain>ATCC 43576 / DSM 4855 / Z</strain>
    </source>
</reference>
<keyword id="KW-0963">Cytoplasm</keyword>
<keyword id="KW-0255">Endonuclease</keyword>
<keyword id="KW-0378">Hydrolase</keyword>
<keyword id="KW-0479">Metal-binding</keyword>
<keyword id="KW-0540">Nuclease</keyword>
<keyword id="KW-1185">Reference proteome</keyword>
<keyword id="KW-0819">tRNA processing</keyword>
<keyword id="KW-0862">Zinc</keyword>
<name>RNP4_METLZ</name>
<protein>
    <recommendedName>
        <fullName evidence="1">Ribonuclease P protein component 4</fullName>
        <shortName evidence="1">RNase P component 4</shortName>
        <ecNumber evidence="1">3.1.26.5</ecNumber>
    </recommendedName>
    <alternativeName>
        <fullName evidence="1">Rpp21</fullName>
    </alternativeName>
</protein>
<proteinExistence type="inferred from homology"/>